<proteinExistence type="inferred from homology"/>
<protein>
    <recommendedName>
        <fullName evidence="1">Pyrroline-5-carboxylate reductase 1</fullName>
        <shortName evidence="1">P5C reductase 1</shortName>
        <shortName evidence="1">P5CR 1</shortName>
        <ecNumber evidence="1">1.5.1.2</ecNumber>
    </recommendedName>
    <alternativeName>
        <fullName evidence="1">PCA reductase 1</fullName>
    </alternativeName>
</protein>
<dbReference type="EC" id="1.5.1.2" evidence="1"/>
<dbReference type="EMBL" id="AL009126">
    <property type="protein sequence ID" value="CAB13741.2"/>
    <property type="molecule type" value="Genomic_DNA"/>
</dbReference>
<dbReference type="EMBL" id="AF006720">
    <property type="protein sequence ID" value="AAB62697.1"/>
    <property type="molecule type" value="Genomic_DNA"/>
</dbReference>
<dbReference type="PIR" id="E69682">
    <property type="entry name" value="E69682"/>
</dbReference>
<dbReference type="RefSeq" id="NP_389730.2">
    <property type="nucleotide sequence ID" value="NC_000964.3"/>
</dbReference>
<dbReference type="RefSeq" id="WP_010886524.1">
    <property type="nucleotide sequence ID" value="NZ_OZ025638.1"/>
</dbReference>
<dbReference type="SMR" id="P0CI77"/>
<dbReference type="FunCoup" id="P0CI77">
    <property type="interactions" value="590"/>
</dbReference>
<dbReference type="STRING" id="224308.BSU18480"/>
<dbReference type="PaxDb" id="224308-BSU18480"/>
<dbReference type="EnsemblBacteria" id="CAB13741">
    <property type="protein sequence ID" value="CAB13741"/>
    <property type="gene ID" value="BSU_18480"/>
</dbReference>
<dbReference type="GeneID" id="86873631"/>
<dbReference type="GeneID" id="940035"/>
<dbReference type="KEGG" id="bsu:BSU18480"/>
<dbReference type="PATRIC" id="fig|224308.43.peg.1958"/>
<dbReference type="eggNOG" id="COG0345">
    <property type="taxonomic scope" value="Bacteria"/>
</dbReference>
<dbReference type="InParanoid" id="P0CI77"/>
<dbReference type="OrthoDB" id="9805754at2"/>
<dbReference type="PhylomeDB" id="P0CI77"/>
<dbReference type="BioCyc" id="BSUB:BSU18480-MONOMER"/>
<dbReference type="UniPathway" id="UPA00098">
    <property type="reaction ID" value="UER00361"/>
</dbReference>
<dbReference type="Proteomes" id="UP000001570">
    <property type="component" value="Chromosome"/>
</dbReference>
<dbReference type="GO" id="GO:0005737">
    <property type="term" value="C:cytoplasm"/>
    <property type="evidence" value="ECO:0007669"/>
    <property type="project" value="UniProtKB-SubCell"/>
</dbReference>
<dbReference type="GO" id="GO:0004735">
    <property type="term" value="F:pyrroline-5-carboxylate reductase activity"/>
    <property type="evidence" value="ECO:0000318"/>
    <property type="project" value="GO_Central"/>
</dbReference>
<dbReference type="GO" id="GO:0055129">
    <property type="term" value="P:L-proline biosynthetic process"/>
    <property type="evidence" value="ECO:0000318"/>
    <property type="project" value="GO_Central"/>
</dbReference>
<dbReference type="FunFam" id="1.10.3730.10:FF:000001">
    <property type="entry name" value="Pyrroline-5-carboxylate reductase"/>
    <property type="match status" value="1"/>
</dbReference>
<dbReference type="FunFam" id="3.40.50.720:FF:000914">
    <property type="entry name" value="Pyrroline-5-carboxylate reductase"/>
    <property type="match status" value="1"/>
</dbReference>
<dbReference type="Gene3D" id="3.40.50.720">
    <property type="entry name" value="NAD(P)-binding Rossmann-like Domain"/>
    <property type="match status" value="1"/>
</dbReference>
<dbReference type="Gene3D" id="1.10.3730.10">
    <property type="entry name" value="ProC C-terminal domain-like"/>
    <property type="match status" value="1"/>
</dbReference>
<dbReference type="HAMAP" id="MF_01925">
    <property type="entry name" value="P5C_reductase"/>
    <property type="match status" value="1"/>
</dbReference>
<dbReference type="InterPro" id="IPR008927">
    <property type="entry name" value="6-PGluconate_DH-like_C_sf"/>
</dbReference>
<dbReference type="InterPro" id="IPR036291">
    <property type="entry name" value="NAD(P)-bd_dom_sf"/>
</dbReference>
<dbReference type="InterPro" id="IPR028939">
    <property type="entry name" value="P5C_Rdtase_cat_N"/>
</dbReference>
<dbReference type="InterPro" id="IPR053790">
    <property type="entry name" value="P5CR-like_CS"/>
</dbReference>
<dbReference type="InterPro" id="IPR029036">
    <property type="entry name" value="P5CR_dimer"/>
</dbReference>
<dbReference type="InterPro" id="IPR000304">
    <property type="entry name" value="Pyrroline-COOH_reductase"/>
</dbReference>
<dbReference type="NCBIfam" id="TIGR00112">
    <property type="entry name" value="proC"/>
    <property type="match status" value="1"/>
</dbReference>
<dbReference type="PANTHER" id="PTHR11645">
    <property type="entry name" value="PYRROLINE-5-CARBOXYLATE REDUCTASE"/>
    <property type="match status" value="1"/>
</dbReference>
<dbReference type="PANTHER" id="PTHR11645:SF49">
    <property type="entry name" value="PYRROLINE-5-CARBOXYLATE REDUCTASE 1"/>
    <property type="match status" value="1"/>
</dbReference>
<dbReference type="Pfam" id="PF03807">
    <property type="entry name" value="F420_oxidored"/>
    <property type="match status" value="1"/>
</dbReference>
<dbReference type="Pfam" id="PF14748">
    <property type="entry name" value="P5CR_dimer"/>
    <property type="match status" value="1"/>
</dbReference>
<dbReference type="PIRSF" id="PIRSF000193">
    <property type="entry name" value="Pyrrol-5-carb_rd"/>
    <property type="match status" value="1"/>
</dbReference>
<dbReference type="SUPFAM" id="SSF48179">
    <property type="entry name" value="6-phosphogluconate dehydrogenase C-terminal domain-like"/>
    <property type="match status" value="1"/>
</dbReference>
<dbReference type="SUPFAM" id="SSF51735">
    <property type="entry name" value="NAD(P)-binding Rossmann-fold domains"/>
    <property type="match status" value="1"/>
</dbReference>
<dbReference type="PROSITE" id="PS00521">
    <property type="entry name" value="P5CR"/>
    <property type="match status" value="1"/>
</dbReference>
<organism>
    <name type="scientific">Bacillus subtilis (strain 168)</name>
    <dbReference type="NCBI Taxonomy" id="224308"/>
    <lineage>
        <taxon>Bacteria</taxon>
        <taxon>Bacillati</taxon>
        <taxon>Bacillota</taxon>
        <taxon>Bacilli</taxon>
        <taxon>Bacillales</taxon>
        <taxon>Bacillaceae</taxon>
        <taxon>Bacillus</taxon>
    </lineage>
</organism>
<feature type="chain" id="PRO_0000187285" description="Pyrroline-5-carboxylate reductase 1">
    <location>
        <begin position="1"/>
        <end position="297"/>
    </location>
</feature>
<reference key="1">
    <citation type="journal article" date="1997" name="Nature">
        <title>The complete genome sequence of the Gram-positive bacterium Bacillus subtilis.</title>
        <authorList>
            <person name="Kunst F."/>
            <person name="Ogasawara N."/>
            <person name="Moszer I."/>
            <person name="Albertini A.M."/>
            <person name="Alloni G."/>
            <person name="Azevedo V."/>
            <person name="Bertero M.G."/>
            <person name="Bessieres P."/>
            <person name="Bolotin A."/>
            <person name="Borchert S."/>
            <person name="Borriss R."/>
            <person name="Boursier L."/>
            <person name="Brans A."/>
            <person name="Braun M."/>
            <person name="Brignell S.C."/>
            <person name="Bron S."/>
            <person name="Brouillet S."/>
            <person name="Bruschi C.V."/>
            <person name="Caldwell B."/>
            <person name="Capuano V."/>
            <person name="Carter N.M."/>
            <person name="Choi S.-K."/>
            <person name="Codani J.-J."/>
            <person name="Connerton I.F."/>
            <person name="Cummings N.J."/>
            <person name="Daniel R.A."/>
            <person name="Denizot F."/>
            <person name="Devine K.M."/>
            <person name="Duesterhoeft A."/>
            <person name="Ehrlich S.D."/>
            <person name="Emmerson P.T."/>
            <person name="Entian K.-D."/>
            <person name="Errington J."/>
            <person name="Fabret C."/>
            <person name="Ferrari E."/>
            <person name="Foulger D."/>
            <person name="Fritz C."/>
            <person name="Fujita M."/>
            <person name="Fujita Y."/>
            <person name="Fuma S."/>
            <person name="Galizzi A."/>
            <person name="Galleron N."/>
            <person name="Ghim S.-Y."/>
            <person name="Glaser P."/>
            <person name="Goffeau A."/>
            <person name="Golightly E.J."/>
            <person name="Grandi G."/>
            <person name="Guiseppi G."/>
            <person name="Guy B.J."/>
            <person name="Haga K."/>
            <person name="Haiech J."/>
            <person name="Harwood C.R."/>
            <person name="Henaut A."/>
            <person name="Hilbert H."/>
            <person name="Holsappel S."/>
            <person name="Hosono S."/>
            <person name="Hullo M.-F."/>
            <person name="Itaya M."/>
            <person name="Jones L.-M."/>
            <person name="Joris B."/>
            <person name="Karamata D."/>
            <person name="Kasahara Y."/>
            <person name="Klaerr-Blanchard M."/>
            <person name="Klein C."/>
            <person name="Kobayashi Y."/>
            <person name="Koetter P."/>
            <person name="Koningstein G."/>
            <person name="Krogh S."/>
            <person name="Kumano M."/>
            <person name="Kurita K."/>
            <person name="Lapidus A."/>
            <person name="Lardinois S."/>
            <person name="Lauber J."/>
            <person name="Lazarevic V."/>
            <person name="Lee S.-M."/>
            <person name="Levine A."/>
            <person name="Liu H."/>
            <person name="Masuda S."/>
            <person name="Mauel C."/>
            <person name="Medigue C."/>
            <person name="Medina N."/>
            <person name="Mellado R.P."/>
            <person name="Mizuno M."/>
            <person name="Moestl D."/>
            <person name="Nakai S."/>
            <person name="Noback M."/>
            <person name="Noone D."/>
            <person name="O'Reilly M."/>
            <person name="Ogawa K."/>
            <person name="Ogiwara A."/>
            <person name="Oudega B."/>
            <person name="Park S.-H."/>
            <person name="Parro V."/>
            <person name="Pohl T.M."/>
            <person name="Portetelle D."/>
            <person name="Porwollik S."/>
            <person name="Prescott A.M."/>
            <person name="Presecan E."/>
            <person name="Pujic P."/>
            <person name="Purnelle B."/>
            <person name="Rapoport G."/>
            <person name="Rey M."/>
            <person name="Reynolds S."/>
            <person name="Rieger M."/>
            <person name="Rivolta C."/>
            <person name="Rocha E."/>
            <person name="Roche B."/>
            <person name="Rose M."/>
            <person name="Sadaie Y."/>
            <person name="Sato T."/>
            <person name="Scanlan E."/>
            <person name="Schleich S."/>
            <person name="Schroeter R."/>
            <person name="Scoffone F."/>
            <person name="Sekiguchi J."/>
            <person name="Sekowska A."/>
            <person name="Seror S.J."/>
            <person name="Serror P."/>
            <person name="Shin B.-S."/>
            <person name="Soldo B."/>
            <person name="Sorokin A."/>
            <person name="Tacconi E."/>
            <person name="Takagi T."/>
            <person name="Takahashi H."/>
            <person name="Takemaru K."/>
            <person name="Takeuchi M."/>
            <person name="Tamakoshi A."/>
            <person name="Tanaka T."/>
            <person name="Terpstra P."/>
            <person name="Tognoni A."/>
            <person name="Tosato V."/>
            <person name="Uchiyama S."/>
            <person name="Vandenbol M."/>
            <person name="Vannier F."/>
            <person name="Vassarotti A."/>
            <person name="Viari A."/>
            <person name="Wambutt R."/>
            <person name="Wedler E."/>
            <person name="Wedler H."/>
            <person name="Weitzenegger T."/>
            <person name="Winters P."/>
            <person name="Wipat A."/>
            <person name="Yamamoto H."/>
            <person name="Yamane K."/>
            <person name="Yasumoto K."/>
            <person name="Yata K."/>
            <person name="Yoshida K."/>
            <person name="Yoshikawa H.-F."/>
            <person name="Zumstein E."/>
            <person name="Yoshikawa H."/>
            <person name="Danchin A."/>
        </authorList>
    </citation>
    <scope>NUCLEOTIDE SEQUENCE [LARGE SCALE GENOMIC DNA]</scope>
    <source>
        <strain>168</strain>
    </source>
</reference>
<reference key="2">
    <citation type="journal article" date="1999" name="Genome Res.">
        <title>Detecting and analyzing DNA sequencing errors: toward a higher quality of the Bacillus subtilis genome sequence.</title>
        <authorList>
            <person name="Medigue C."/>
            <person name="Rose M."/>
            <person name="Viari A."/>
            <person name="Danchin A."/>
        </authorList>
    </citation>
    <scope>SEQUENCE REVISION</scope>
</reference>
<reference key="3">
    <citation type="journal article" date="2001" name="J. Bacteriol.">
        <title>Multiple genes for the last step of proline biosynthesis in Bacillus subtilis.</title>
        <authorList>
            <person name="Belitsky B.R."/>
            <person name="Brill J."/>
            <person name="Bremer E."/>
            <person name="Sonenshein A.L."/>
        </authorList>
    </citation>
    <scope>NUCLEOTIDE SEQUENCE [GENOMIC DNA] OF 199-297</scope>
    <scope>FUNCTION</scope>
    <scope>PATHWAY</scope>
    <scope>DISRUPTION PHENOTYPE</scope>
    <source>
        <strain>168 / SMY</strain>
    </source>
</reference>
<evidence type="ECO:0000255" key="1">
    <source>
        <dbReference type="HAMAP-Rule" id="MF_01925"/>
    </source>
</evidence>
<evidence type="ECO:0000269" key="2">
    <source>
    </source>
</evidence>
<evidence type="ECO:0000305" key="3">
    <source>
    </source>
</evidence>
<keyword id="KW-0028">Amino-acid biosynthesis</keyword>
<keyword id="KW-0963">Cytoplasm</keyword>
<keyword id="KW-0521">NADP</keyword>
<keyword id="KW-0560">Oxidoreductase</keyword>
<keyword id="KW-0641">Proline biosynthesis</keyword>
<keyword id="KW-1185">Reference proteome</keyword>
<name>P5CR1_BACSU</name>
<sequence length="297" mass="32031">MRTKKRTKEMLPIFDQKKVAFIGAGSMAEGMISGIVRANKIPKQNICVTNRSNTERLTELELQYGIKGALPNQLCIEDMDVLILAMKPKDAENALSSLKSRIQPHQLILSVLAGITTSFIEQSLLNEQPVVRVMPNTSSMIGASATAIALGKYVSEDLKKLAEALLGCMGEVYTIQENQMDIFTGIAGSGPAYFYYLMEFIEKTGEEAGLDKQLSRSIGAQTLLGAAKMLMETGEHPEILRDNITSPNGTTAAGLQALKKSGGGEAISQAIKHAAKRSKEISEDIEKTAAPLSGVIK</sequence>
<comment type="function">
    <text evidence="3">Catalyzes the reduction of 1-pyrroline-5-carboxylate (PCA) to L-proline.</text>
</comment>
<comment type="catalytic activity">
    <reaction evidence="1">
        <text>L-proline + NADP(+) = (S)-1-pyrroline-5-carboxylate + NADPH + 2 H(+)</text>
        <dbReference type="Rhea" id="RHEA:14109"/>
        <dbReference type="ChEBI" id="CHEBI:15378"/>
        <dbReference type="ChEBI" id="CHEBI:17388"/>
        <dbReference type="ChEBI" id="CHEBI:57783"/>
        <dbReference type="ChEBI" id="CHEBI:58349"/>
        <dbReference type="ChEBI" id="CHEBI:60039"/>
        <dbReference type="EC" id="1.5.1.2"/>
    </reaction>
</comment>
<comment type="catalytic activity">
    <reaction evidence="1">
        <text>L-proline + NAD(+) = (S)-1-pyrroline-5-carboxylate + NADH + 2 H(+)</text>
        <dbReference type="Rhea" id="RHEA:14105"/>
        <dbReference type="ChEBI" id="CHEBI:15378"/>
        <dbReference type="ChEBI" id="CHEBI:17388"/>
        <dbReference type="ChEBI" id="CHEBI:57540"/>
        <dbReference type="ChEBI" id="CHEBI:57945"/>
        <dbReference type="ChEBI" id="CHEBI:60039"/>
        <dbReference type="EC" id="1.5.1.2"/>
    </reaction>
</comment>
<comment type="pathway">
    <text evidence="1 2">Amino-acid biosynthesis; L-proline biosynthesis; L-proline from L-glutamate 5-semialdehyde: step 1/1.</text>
</comment>
<comment type="subcellular location">
    <subcellularLocation>
        <location evidence="1">Cytoplasm</location>
    </subcellularLocation>
</comment>
<comment type="disruption phenotype">
    <text evidence="2">The proG proH proI triple mutant is auxotrophic for proline.</text>
</comment>
<comment type="similarity">
    <text evidence="1">Belongs to the pyrroline-5-carboxylate reductase family.</text>
</comment>
<gene>
    <name type="primary">proH</name>
    <name type="synonym">proC</name>
    <name type="synonym">yoxE</name>
    <name type="ordered locus">BSU18480</name>
</gene>
<accession>P0CI77</accession>
<accession>O07508</accession>
<accession>O31828</accession>
<accession>P14383</accession>